<evidence type="ECO:0000250" key="1"/>
<evidence type="ECO:0000255" key="2"/>
<evidence type="ECO:0000256" key="3">
    <source>
        <dbReference type="SAM" id="MobiDB-lite"/>
    </source>
</evidence>
<evidence type="ECO:0000269" key="4">
    <source>
    </source>
</evidence>
<evidence type="ECO:0000303" key="5">
    <source>
    </source>
</evidence>
<evidence type="ECO:0000303" key="6">
    <source>
    </source>
</evidence>
<evidence type="ECO:0000303" key="7">
    <source>
    </source>
</evidence>
<evidence type="ECO:0000305" key="8"/>
<evidence type="ECO:0007744" key="9">
    <source>
    </source>
</evidence>
<dbReference type="EMBL" id="AF060883">
    <property type="protein sequence ID" value="AAD05208.1"/>
    <property type="molecule type" value="mRNA"/>
</dbReference>
<dbReference type="EMBL" id="AB034693">
    <property type="protein sequence ID" value="BAA86226.1"/>
    <property type="molecule type" value="mRNA"/>
</dbReference>
<dbReference type="EMBL" id="AB034694">
    <property type="protein sequence ID" value="BAA86227.1"/>
    <property type="molecule type" value="mRNA"/>
</dbReference>
<dbReference type="EMBL" id="AK002616">
    <property type="protein sequence ID" value="BAB22232.1"/>
    <property type="molecule type" value="mRNA"/>
</dbReference>
<dbReference type="EMBL" id="BC003706">
    <property type="protein sequence ID" value="AAH03706.1"/>
    <property type="molecule type" value="mRNA"/>
</dbReference>
<dbReference type="CCDS" id="CCDS17861.1">
    <molecule id="Q9R0H2-2"/>
</dbReference>
<dbReference type="CCDS" id="CCDS51075.1">
    <molecule id="Q9R0H2-1"/>
</dbReference>
<dbReference type="RefSeq" id="NP_001156994.1">
    <molecule id="Q9R0H2-1"/>
    <property type="nucleotide sequence ID" value="NM_001163522.1"/>
</dbReference>
<dbReference type="RefSeq" id="NP_058581.2">
    <molecule id="Q9R0H2-2"/>
    <property type="nucleotide sequence ID" value="NM_016885.2"/>
</dbReference>
<dbReference type="RefSeq" id="XP_006501905.1">
    <molecule id="Q9R0H2-3"/>
    <property type="nucleotide sequence ID" value="XM_006501842.4"/>
</dbReference>
<dbReference type="SMR" id="Q9R0H2"/>
<dbReference type="FunCoup" id="Q9R0H2">
    <property type="interactions" value="453"/>
</dbReference>
<dbReference type="STRING" id="10090.ENSMUSP00000112603"/>
<dbReference type="GlyCosmos" id="Q9R0H2">
    <property type="glycosylation" value="5 sites, No reported glycans"/>
</dbReference>
<dbReference type="GlyGen" id="Q9R0H2">
    <property type="glycosylation" value="5 sites"/>
</dbReference>
<dbReference type="iPTMnet" id="Q9R0H2"/>
<dbReference type="PhosphoSitePlus" id="Q9R0H2"/>
<dbReference type="jPOST" id="Q9R0H2"/>
<dbReference type="PaxDb" id="10090-ENSMUSP00000112603"/>
<dbReference type="ProteomicsDB" id="290072">
    <molecule id="Q9R0H2-1"/>
</dbReference>
<dbReference type="ProteomicsDB" id="290073">
    <molecule id="Q9R0H2-2"/>
</dbReference>
<dbReference type="ProteomicsDB" id="290074">
    <molecule id="Q9R0H2-3"/>
</dbReference>
<dbReference type="ProteomicsDB" id="290075">
    <molecule id="Q9R0H2-4"/>
</dbReference>
<dbReference type="Antibodypedia" id="989">
    <property type="antibodies" value="213 antibodies from 34 providers"/>
</dbReference>
<dbReference type="DNASU" id="59308"/>
<dbReference type="Ensembl" id="ENSMUST00000119475.6">
    <molecule id="Q9R0H2-2"/>
    <property type="protein sequence ID" value="ENSMUSP00000114102.2"/>
    <property type="gene ID" value="ENSMUSG00000054690.18"/>
</dbReference>
<dbReference type="Ensembl" id="ENSMUST00000122064.8">
    <molecule id="Q9R0H2-1"/>
    <property type="protein sequence ID" value="ENSMUSP00000112603.2"/>
    <property type="gene ID" value="ENSMUSG00000054690.18"/>
</dbReference>
<dbReference type="GeneID" id="59308"/>
<dbReference type="KEGG" id="mmu:59308"/>
<dbReference type="UCSC" id="uc008rmk.2">
    <molecule id="Q9R0H2-2"/>
    <property type="organism name" value="mouse"/>
</dbReference>
<dbReference type="UCSC" id="uc008rml.2">
    <molecule id="Q9R0H2-1"/>
    <property type="organism name" value="mouse"/>
</dbReference>
<dbReference type="AGR" id="MGI:1891716"/>
<dbReference type="CTD" id="51705"/>
<dbReference type="MGI" id="MGI:1891716">
    <property type="gene designation" value="Emcn"/>
</dbReference>
<dbReference type="VEuPathDB" id="HostDB:ENSMUSG00000054690"/>
<dbReference type="eggNOG" id="ENOG502S6VA">
    <property type="taxonomic scope" value="Eukaryota"/>
</dbReference>
<dbReference type="GeneTree" id="ENSGT00390000012139"/>
<dbReference type="InParanoid" id="Q9R0H2"/>
<dbReference type="OMA" id="ISQFQGT"/>
<dbReference type="OrthoDB" id="9632909at2759"/>
<dbReference type="PhylomeDB" id="Q9R0H2"/>
<dbReference type="TreeFam" id="TF337783"/>
<dbReference type="BioGRID-ORCS" id="59308">
    <property type="hits" value="1 hit in 76 CRISPR screens"/>
</dbReference>
<dbReference type="PRO" id="PR:Q9R0H2"/>
<dbReference type="Proteomes" id="UP000000589">
    <property type="component" value="Chromosome 3"/>
</dbReference>
<dbReference type="RNAct" id="Q9R0H2">
    <property type="molecule type" value="protein"/>
</dbReference>
<dbReference type="Bgee" id="ENSMUSG00000054690">
    <property type="expression patterns" value="Expressed in left lung lobe and 224 other cell types or tissues"/>
</dbReference>
<dbReference type="ExpressionAtlas" id="Q9R0H2">
    <property type="expression patterns" value="baseline and differential"/>
</dbReference>
<dbReference type="GO" id="GO:0016020">
    <property type="term" value="C:membrane"/>
    <property type="evidence" value="ECO:0000247"/>
    <property type="project" value="MGI"/>
</dbReference>
<dbReference type="GO" id="GO:0005886">
    <property type="term" value="C:plasma membrane"/>
    <property type="evidence" value="ECO:0000250"/>
    <property type="project" value="HGNC"/>
</dbReference>
<dbReference type="GO" id="GO:0030246">
    <property type="term" value="F:carbohydrate binding"/>
    <property type="evidence" value="ECO:0000250"/>
    <property type="project" value="HGNC"/>
</dbReference>
<dbReference type="GO" id="GO:0001525">
    <property type="term" value="P:angiogenesis"/>
    <property type="evidence" value="ECO:0000250"/>
    <property type="project" value="HGNC"/>
</dbReference>
<dbReference type="GO" id="GO:0098609">
    <property type="term" value="P:cell-cell adhesion"/>
    <property type="evidence" value="ECO:0000250"/>
    <property type="project" value="HGNC"/>
</dbReference>
<dbReference type="GO" id="GO:0061484">
    <property type="term" value="P:hematopoietic stem cell homeostasis"/>
    <property type="evidence" value="ECO:0000315"/>
    <property type="project" value="MGI"/>
</dbReference>
<dbReference type="GO" id="GO:0030155">
    <property type="term" value="P:regulation of cell adhesion"/>
    <property type="evidence" value="ECO:0000250"/>
    <property type="project" value="HGNC"/>
</dbReference>
<dbReference type="InterPro" id="IPR010740">
    <property type="entry name" value="Endomucin"/>
</dbReference>
<dbReference type="PANTHER" id="PTHR15869:SF0">
    <property type="entry name" value="ENDOMUCIN"/>
    <property type="match status" value="1"/>
</dbReference>
<dbReference type="PANTHER" id="PTHR15869">
    <property type="entry name" value="ENDOMUCIN-RELATED"/>
    <property type="match status" value="1"/>
</dbReference>
<dbReference type="Pfam" id="PF07010">
    <property type="entry name" value="Endomucin"/>
    <property type="match status" value="1"/>
</dbReference>
<protein>
    <recommendedName>
        <fullName>Endomucin</fullName>
    </recommendedName>
    <alternativeName>
        <fullName>Endomucin-1/2</fullName>
    </alternativeName>
    <alternativeName>
        <fullName>Mucin-14</fullName>
        <shortName>MUC-14</shortName>
    </alternativeName>
</protein>
<accession>Q9R0H2</accession>
<accession>Q78KL2</accession>
<accession>Q9DCN9</accession>
<accession>Q9ULC1</accession>
<accession>Q9Z2I1</accession>
<proteinExistence type="evidence at protein level"/>
<gene>
    <name type="primary">Emcn</name>
    <name type="synonym">Muc14</name>
</gene>
<feature type="signal peptide" evidence="2">
    <location>
        <begin position="1"/>
        <end position="20"/>
    </location>
</feature>
<feature type="chain" id="PRO_0000019291" description="Endomucin">
    <location>
        <begin position="21"/>
        <end position="261"/>
    </location>
</feature>
<feature type="topological domain" description="Extracellular" evidence="2">
    <location>
        <begin position="21"/>
        <end position="190"/>
    </location>
</feature>
<feature type="transmembrane region" description="Helical" evidence="2">
    <location>
        <begin position="191"/>
        <end position="211"/>
    </location>
</feature>
<feature type="topological domain" description="Cytoplasmic" evidence="2">
    <location>
        <begin position="212"/>
        <end position="261"/>
    </location>
</feature>
<feature type="region of interest" description="Disordered" evidence="3">
    <location>
        <begin position="21"/>
        <end position="135"/>
    </location>
</feature>
<feature type="region of interest" description="Disordered" evidence="3">
    <location>
        <begin position="221"/>
        <end position="240"/>
    </location>
</feature>
<feature type="compositionally biased region" description="Polar residues" evidence="3">
    <location>
        <begin position="28"/>
        <end position="43"/>
    </location>
</feature>
<feature type="compositionally biased region" description="Polar residues" evidence="3">
    <location>
        <begin position="65"/>
        <end position="135"/>
    </location>
</feature>
<feature type="modified residue" description="Phosphoserine" evidence="9">
    <location>
        <position position="237"/>
    </location>
</feature>
<feature type="glycosylation site" description="N-linked (GlcNAc...) asparagine" evidence="2">
    <location>
        <position position="28"/>
    </location>
</feature>
<feature type="glycosylation site" description="N-linked (GlcNAc...) asparagine" evidence="2">
    <location>
        <position position="101"/>
    </location>
</feature>
<feature type="glycosylation site" description="N-linked (GlcNAc...) asparagine" evidence="2">
    <location>
        <position position="119"/>
    </location>
</feature>
<feature type="glycosylation site" description="N-linked (GlcNAc...) asparagine" evidence="2">
    <location>
        <position position="127"/>
    </location>
</feature>
<feature type="glycosylation site" description="N-linked (GlcNAc...) asparagine" evidence="2">
    <location>
        <position position="131"/>
    </location>
</feature>
<feature type="splice variant" id="VSP_010828" description="In isoform 4." evidence="5">
    <location>
        <begin position="91"/>
        <end position="141"/>
    </location>
</feature>
<feature type="splice variant" id="VSP_010827" description="In isoform 3." evidence="5">
    <original>VGTTTEGPLRNESSTMKITVPNTPTSNANSTLPGSQNKT</original>
    <variation>A</variation>
    <location>
        <begin position="91"/>
        <end position="129"/>
    </location>
</feature>
<feature type="splice variant" id="VSP_010829" description="In isoform 2." evidence="5 6 7">
    <original>TENQSSIRTTEISV</original>
    <variation>I</variation>
    <location>
        <begin position="129"/>
        <end position="142"/>
    </location>
</feature>
<feature type="sequence conflict" description="In Ref. 4; BAB22232." evidence="8" ref="4">
    <original>C</original>
    <variation>G</variation>
    <location>
        <position position="18"/>
    </location>
</feature>
<feature type="sequence conflict" description="In Ref. 1; AAD05208." evidence="8" ref="1">
    <original>S</original>
    <variation>P</variation>
    <location>
        <position position="157"/>
    </location>
</feature>
<feature type="sequence conflict" description="In Ref. 4; BAB22232." evidence="8" ref="4">
    <original>Q</original>
    <variation>R</variation>
    <location>
        <position position="256"/>
    </location>
</feature>
<reference key="1">
    <citation type="journal article" date="1999" name="Blood">
        <title>Biochemical characterization and molecular cloning of a novel endothelial-specific sialomucin.</title>
        <authorList>
            <person name="Morgan S.M."/>
            <person name="Samulowitz U."/>
            <person name="Darley L."/>
            <person name="Simmons D.L."/>
            <person name="Vestweber D."/>
        </authorList>
    </citation>
    <scope>NUCLEOTIDE SEQUENCE [MRNA] (ISOFORM 2)</scope>
    <scope>O-SIALOGLYCOSYLATION</scope>
    <source>
        <tissue>Brain</tissue>
    </source>
</reference>
<reference key="2">
    <citation type="journal article" date="2001" name="FEBS Lett.">
        <title>Identification of human endomucin-1 and -2 as membrane-bound O-sialoglycoproteins with anti-adhesive activity.</title>
        <authorList>
            <person name="Kinoshita M."/>
            <person name="Nakamura T."/>
            <person name="Ihara M."/>
            <person name="Haraguchi T."/>
            <person name="Hiraoka Y."/>
            <person name="Tashiro K."/>
            <person name="Noda M."/>
        </authorList>
    </citation>
    <scope>NUCLEOTIDE SEQUENCE [MRNA] (ISOFORM 1)</scope>
    <scope>GLYCOSYLATION</scope>
    <scope>TISSUE SPECIFICITY</scope>
    <source>
        <strain>C57BL/6J</strain>
        <tissue>Brain</tissue>
    </source>
</reference>
<reference key="3">
    <citation type="journal article" date="2001" name="Biochem. Biophys. Res. Commun.">
        <title>Endomucin is expressed in embryonic dorsal aorta and is able to inhibit cell adhesion.</title>
        <authorList>
            <person name="Ueno M."/>
            <person name="Igarashi K."/>
            <person name="Kimura N."/>
            <person name="Okita K."/>
            <person name="Takizawa M."/>
            <person name="Nobuhisa I."/>
            <person name="Kojima T."/>
            <person name="Kitamura T."/>
            <person name="Samulowitz U."/>
            <person name="Vestweber D."/>
            <person name="Shimomura T."/>
            <person name="Suda T."/>
            <person name="Nakashima K."/>
            <person name="Taga T."/>
        </authorList>
    </citation>
    <scope>NUCLEOTIDE SEQUENCE [MRNA] (ISOFORMS 1; 2; 3 AND 4)</scope>
</reference>
<reference key="4">
    <citation type="journal article" date="2005" name="Science">
        <title>The transcriptional landscape of the mammalian genome.</title>
        <authorList>
            <person name="Carninci P."/>
            <person name="Kasukawa T."/>
            <person name="Katayama S."/>
            <person name="Gough J."/>
            <person name="Frith M.C."/>
            <person name="Maeda N."/>
            <person name="Oyama R."/>
            <person name="Ravasi T."/>
            <person name="Lenhard B."/>
            <person name="Wells C."/>
            <person name="Kodzius R."/>
            <person name="Shimokawa K."/>
            <person name="Bajic V.B."/>
            <person name="Brenner S.E."/>
            <person name="Batalov S."/>
            <person name="Forrest A.R."/>
            <person name="Zavolan M."/>
            <person name="Davis M.J."/>
            <person name="Wilming L.G."/>
            <person name="Aidinis V."/>
            <person name="Allen J.E."/>
            <person name="Ambesi-Impiombato A."/>
            <person name="Apweiler R."/>
            <person name="Aturaliya R.N."/>
            <person name="Bailey T.L."/>
            <person name="Bansal M."/>
            <person name="Baxter L."/>
            <person name="Beisel K.W."/>
            <person name="Bersano T."/>
            <person name="Bono H."/>
            <person name="Chalk A.M."/>
            <person name="Chiu K.P."/>
            <person name="Choudhary V."/>
            <person name="Christoffels A."/>
            <person name="Clutterbuck D.R."/>
            <person name="Crowe M.L."/>
            <person name="Dalla E."/>
            <person name="Dalrymple B.P."/>
            <person name="de Bono B."/>
            <person name="Della Gatta G."/>
            <person name="di Bernardo D."/>
            <person name="Down T."/>
            <person name="Engstrom P."/>
            <person name="Fagiolini M."/>
            <person name="Faulkner G."/>
            <person name="Fletcher C.F."/>
            <person name="Fukushima T."/>
            <person name="Furuno M."/>
            <person name="Futaki S."/>
            <person name="Gariboldi M."/>
            <person name="Georgii-Hemming P."/>
            <person name="Gingeras T.R."/>
            <person name="Gojobori T."/>
            <person name="Green R.E."/>
            <person name="Gustincich S."/>
            <person name="Harbers M."/>
            <person name="Hayashi Y."/>
            <person name="Hensch T.K."/>
            <person name="Hirokawa N."/>
            <person name="Hill D."/>
            <person name="Huminiecki L."/>
            <person name="Iacono M."/>
            <person name="Ikeo K."/>
            <person name="Iwama A."/>
            <person name="Ishikawa T."/>
            <person name="Jakt M."/>
            <person name="Kanapin A."/>
            <person name="Katoh M."/>
            <person name="Kawasawa Y."/>
            <person name="Kelso J."/>
            <person name="Kitamura H."/>
            <person name="Kitano H."/>
            <person name="Kollias G."/>
            <person name="Krishnan S.P."/>
            <person name="Kruger A."/>
            <person name="Kummerfeld S.K."/>
            <person name="Kurochkin I.V."/>
            <person name="Lareau L.F."/>
            <person name="Lazarevic D."/>
            <person name="Lipovich L."/>
            <person name="Liu J."/>
            <person name="Liuni S."/>
            <person name="McWilliam S."/>
            <person name="Madan Babu M."/>
            <person name="Madera M."/>
            <person name="Marchionni L."/>
            <person name="Matsuda H."/>
            <person name="Matsuzawa S."/>
            <person name="Miki H."/>
            <person name="Mignone F."/>
            <person name="Miyake S."/>
            <person name="Morris K."/>
            <person name="Mottagui-Tabar S."/>
            <person name="Mulder N."/>
            <person name="Nakano N."/>
            <person name="Nakauchi H."/>
            <person name="Ng P."/>
            <person name="Nilsson R."/>
            <person name="Nishiguchi S."/>
            <person name="Nishikawa S."/>
            <person name="Nori F."/>
            <person name="Ohara O."/>
            <person name="Okazaki Y."/>
            <person name="Orlando V."/>
            <person name="Pang K.C."/>
            <person name="Pavan W.J."/>
            <person name="Pavesi G."/>
            <person name="Pesole G."/>
            <person name="Petrovsky N."/>
            <person name="Piazza S."/>
            <person name="Reed J."/>
            <person name="Reid J.F."/>
            <person name="Ring B.Z."/>
            <person name="Ringwald M."/>
            <person name="Rost B."/>
            <person name="Ruan Y."/>
            <person name="Salzberg S.L."/>
            <person name="Sandelin A."/>
            <person name="Schneider C."/>
            <person name="Schoenbach C."/>
            <person name="Sekiguchi K."/>
            <person name="Semple C.A."/>
            <person name="Seno S."/>
            <person name="Sessa L."/>
            <person name="Sheng Y."/>
            <person name="Shibata Y."/>
            <person name="Shimada H."/>
            <person name="Shimada K."/>
            <person name="Silva D."/>
            <person name="Sinclair B."/>
            <person name="Sperling S."/>
            <person name="Stupka E."/>
            <person name="Sugiura K."/>
            <person name="Sultana R."/>
            <person name="Takenaka Y."/>
            <person name="Taki K."/>
            <person name="Tammoja K."/>
            <person name="Tan S.L."/>
            <person name="Tang S."/>
            <person name="Taylor M.S."/>
            <person name="Tegner J."/>
            <person name="Teichmann S.A."/>
            <person name="Ueda H.R."/>
            <person name="van Nimwegen E."/>
            <person name="Verardo R."/>
            <person name="Wei C.L."/>
            <person name="Yagi K."/>
            <person name="Yamanishi H."/>
            <person name="Zabarovsky E."/>
            <person name="Zhu S."/>
            <person name="Zimmer A."/>
            <person name="Hide W."/>
            <person name="Bult C."/>
            <person name="Grimmond S.M."/>
            <person name="Teasdale R.D."/>
            <person name="Liu E.T."/>
            <person name="Brusic V."/>
            <person name="Quackenbush J."/>
            <person name="Wahlestedt C."/>
            <person name="Mattick J.S."/>
            <person name="Hume D.A."/>
            <person name="Kai C."/>
            <person name="Sasaki D."/>
            <person name="Tomaru Y."/>
            <person name="Fukuda S."/>
            <person name="Kanamori-Katayama M."/>
            <person name="Suzuki M."/>
            <person name="Aoki J."/>
            <person name="Arakawa T."/>
            <person name="Iida J."/>
            <person name="Imamura K."/>
            <person name="Itoh M."/>
            <person name="Kato T."/>
            <person name="Kawaji H."/>
            <person name="Kawagashira N."/>
            <person name="Kawashima T."/>
            <person name="Kojima M."/>
            <person name="Kondo S."/>
            <person name="Konno H."/>
            <person name="Nakano K."/>
            <person name="Ninomiya N."/>
            <person name="Nishio T."/>
            <person name="Okada M."/>
            <person name="Plessy C."/>
            <person name="Shibata K."/>
            <person name="Shiraki T."/>
            <person name="Suzuki S."/>
            <person name="Tagami M."/>
            <person name="Waki K."/>
            <person name="Watahiki A."/>
            <person name="Okamura-Oho Y."/>
            <person name="Suzuki H."/>
            <person name="Kawai J."/>
            <person name="Hayashizaki Y."/>
        </authorList>
    </citation>
    <scope>NUCLEOTIDE SEQUENCE [LARGE SCALE MRNA] (ISOFORM 2)</scope>
    <source>
        <strain>C57BL/6J</strain>
        <tissue>Kidney</tissue>
    </source>
</reference>
<reference key="5">
    <citation type="journal article" date="2004" name="Genome Res.">
        <title>The status, quality, and expansion of the NIH full-length cDNA project: the Mammalian Gene Collection (MGC).</title>
        <authorList>
            <consortium name="The MGC Project Team"/>
        </authorList>
    </citation>
    <scope>NUCLEOTIDE SEQUENCE [LARGE SCALE MRNA] (ISOFORM 1)</scope>
</reference>
<reference key="6">
    <citation type="journal article" date="2010" name="Cell">
        <title>A tissue-specific atlas of mouse protein phosphorylation and expression.</title>
        <authorList>
            <person name="Huttlin E.L."/>
            <person name="Jedrychowski M.P."/>
            <person name="Elias J.E."/>
            <person name="Goswami T."/>
            <person name="Rad R."/>
            <person name="Beausoleil S.A."/>
            <person name="Villen J."/>
            <person name="Haas W."/>
            <person name="Sowa M.E."/>
            <person name="Gygi S.P."/>
        </authorList>
    </citation>
    <scope>PHOSPHORYLATION [LARGE SCALE ANALYSIS] AT SER-237</scope>
    <scope>IDENTIFICATION BY MASS SPECTROMETRY [LARGE SCALE ANALYSIS]</scope>
    <source>
        <tissue>Heart</tissue>
        <tissue>Kidney</tissue>
    </source>
</reference>
<sequence>MRLLQATVLFFLLSNSLCHSEDGKDVQNDSIPTPAETSTTKASVTIPGIVSVTNPNKPADGTPPEGTTKSDVSQTSLVTTINSLTTPKHEVGTTTEGPLRNESSTMKITVPNTPTSNANSTLPGSQNKTENQSSIRTTEISVTTQLLDALPKITATSSASLTTAHTMSLLQDTEDRKIATTPSTTPSYSSIILPVVIALVVITLLVFTLVGLYRICWKRDPGTPENGNDQPQSDKESVKLLTVKTISHESGEHSAQGKTKN</sequence>
<comment type="function">
    <text evidence="1">Endothelial sialomucin, also called endomucin or mucin-like sialoglycoprotein, which interferes with the assembly of focal adhesion complexes and inhibits interaction between cells and the extracellular matrix.</text>
</comment>
<comment type="subcellular location">
    <subcellularLocation>
        <location evidence="8">Membrane</location>
        <topology evidence="8">Single-pass type I membrane protein</topology>
    </subcellularLocation>
</comment>
<comment type="alternative products">
    <event type="alternative splicing"/>
    <isoform>
        <id>Q9R0H2-1</id>
        <name>1</name>
        <name>1a</name>
        <sequence type="displayed"/>
    </isoform>
    <isoform>
        <id>Q9R0H2-2</id>
        <name>2</name>
        <name>1b</name>
        <sequence type="described" ref="VSP_010829"/>
    </isoform>
    <isoform>
        <id>Q9R0H2-3</id>
        <name>3</name>
        <name>1c</name>
        <sequence type="described" ref="VSP_010827"/>
    </isoform>
    <isoform>
        <id>Q9R0H2-4</id>
        <name>4</name>
        <name>1d</name>
        <sequence type="described" ref="VSP_010828"/>
    </isoform>
</comment>
<comment type="tissue specificity">
    <text evidence="4">Highly expressed in heart and kidney, followed by brain, spleen, thymus, liver and lung. Exclusively expressed in endothelial cells.</text>
</comment>
<comment type="PTM">
    <text evidence="4">Highly O-glycosylated. Sialic acid-rich glycoprotein.</text>
</comment>
<name>MUCEN_MOUSE</name>
<keyword id="KW-0025">Alternative splicing</keyword>
<keyword id="KW-0325">Glycoprotein</keyword>
<keyword id="KW-0472">Membrane</keyword>
<keyword id="KW-0597">Phosphoprotein</keyword>
<keyword id="KW-1185">Reference proteome</keyword>
<keyword id="KW-0732">Signal</keyword>
<keyword id="KW-0812">Transmembrane</keyword>
<keyword id="KW-1133">Transmembrane helix</keyword>
<organism>
    <name type="scientific">Mus musculus</name>
    <name type="common">Mouse</name>
    <dbReference type="NCBI Taxonomy" id="10090"/>
    <lineage>
        <taxon>Eukaryota</taxon>
        <taxon>Metazoa</taxon>
        <taxon>Chordata</taxon>
        <taxon>Craniata</taxon>
        <taxon>Vertebrata</taxon>
        <taxon>Euteleostomi</taxon>
        <taxon>Mammalia</taxon>
        <taxon>Eutheria</taxon>
        <taxon>Euarchontoglires</taxon>
        <taxon>Glires</taxon>
        <taxon>Rodentia</taxon>
        <taxon>Myomorpha</taxon>
        <taxon>Muroidea</taxon>
        <taxon>Muridae</taxon>
        <taxon>Murinae</taxon>
        <taxon>Mus</taxon>
        <taxon>Mus</taxon>
    </lineage>
</organism>